<comment type="function">
    <text evidence="1">Catalyzes the condensation of ATP and 5-phosphoribose 1-diphosphate to form N'-(5'-phosphoribosyl)-ATP (PR-ATP). Has a crucial role in the pathway because the rate of histidine biosynthesis seems to be controlled primarily by regulation of HisG enzymatic activity.</text>
</comment>
<comment type="catalytic activity">
    <reaction evidence="1">
        <text>1-(5-phospho-beta-D-ribosyl)-ATP + diphosphate = 5-phospho-alpha-D-ribose 1-diphosphate + ATP</text>
        <dbReference type="Rhea" id="RHEA:18473"/>
        <dbReference type="ChEBI" id="CHEBI:30616"/>
        <dbReference type="ChEBI" id="CHEBI:33019"/>
        <dbReference type="ChEBI" id="CHEBI:58017"/>
        <dbReference type="ChEBI" id="CHEBI:73183"/>
        <dbReference type="EC" id="2.4.2.17"/>
    </reaction>
</comment>
<comment type="cofactor">
    <cofactor evidence="1">
        <name>Mg(2+)</name>
        <dbReference type="ChEBI" id="CHEBI:18420"/>
    </cofactor>
</comment>
<comment type="activity regulation">
    <text evidence="1">Feedback inhibited by histidine.</text>
</comment>
<comment type="pathway">
    <text evidence="1">Amino-acid biosynthesis; L-histidine biosynthesis; L-histidine from 5-phospho-alpha-D-ribose 1-diphosphate: step 1/9.</text>
</comment>
<comment type="subcellular location">
    <subcellularLocation>
        <location evidence="1">Cytoplasm</location>
    </subcellularLocation>
</comment>
<comment type="similarity">
    <text evidence="1">Belongs to the ATP phosphoribosyltransferase family. Long subfamily.</text>
</comment>
<proteinExistence type="inferred from homology"/>
<name>HIS1_ALIF1</name>
<dbReference type="EC" id="2.4.2.17" evidence="1"/>
<dbReference type="EMBL" id="CP000020">
    <property type="protein sequence ID" value="AAW85507.1"/>
    <property type="molecule type" value="Genomic_DNA"/>
</dbReference>
<dbReference type="RefSeq" id="WP_011261645.1">
    <property type="nucleotide sequence ID" value="NC_006840.2"/>
</dbReference>
<dbReference type="RefSeq" id="YP_204395.1">
    <property type="nucleotide sequence ID" value="NC_006840.2"/>
</dbReference>
<dbReference type="SMR" id="Q5E639"/>
<dbReference type="STRING" id="312309.VF_1012"/>
<dbReference type="EnsemblBacteria" id="AAW85507">
    <property type="protein sequence ID" value="AAW85507"/>
    <property type="gene ID" value="VF_1012"/>
</dbReference>
<dbReference type="GeneID" id="54163684"/>
<dbReference type="KEGG" id="vfi:VF_1012"/>
<dbReference type="PATRIC" id="fig|312309.11.peg.1012"/>
<dbReference type="eggNOG" id="COG0040">
    <property type="taxonomic scope" value="Bacteria"/>
</dbReference>
<dbReference type="HOGENOM" id="CLU_038115_1_0_6"/>
<dbReference type="OrthoDB" id="9801867at2"/>
<dbReference type="UniPathway" id="UPA00031">
    <property type="reaction ID" value="UER00006"/>
</dbReference>
<dbReference type="Proteomes" id="UP000000537">
    <property type="component" value="Chromosome I"/>
</dbReference>
<dbReference type="GO" id="GO:0005737">
    <property type="term" value="C:cytoplasm"/>
    <property type="evidence" value="ECO:0007669"/>
    <property type="project" value="UniProtKB-SubCell"/>
</dbReference>
<dbReference type="GO" id="GO:0005524">
    <property type="term" value="F:ATP binding"/>
    <property type="evidence" value="ECO:0007669"/>
    <property type="project" value="UniProtKB-KW"/>
</dbReference>
<dbReference type="GO" id="GO:0003879">
    <property type="term" value="F:ATP phosphoribosyltransferase activity"/>
    <property type="evidence" value="ECO:0007669"/>
    <property type="project" value="UniProtKB-UniRule"/>
</dbReference>
<dbReference type="GO" id="GO:0000287">
    <property type="term" value="F:magnesium ion binding"/>
    <property type="evidence" value="ECO:0007669"/>
    <property type="project" value="UniProtKB-UniRule"/>
</dbReference>
<dbReference type="GO" id="GO:0000105">
    <property type="term" value="P:L-histidine biosynthetic process"/>
    <property type="evidence" value="ECO:0007669"/>
    <property type="project" value="UniProtKB-UniRule"/>
</dbReference>
<dbReference type="FunFam" id="3.30.70.120:FF:000002">
    <property type="entry name" value="ATP phosphoribosyltransferase"/>
    <property type="match status" value="1"/>
</dbReference>
<dbReference type="FunFam" id="3.40.190.10:FF:000008">
    <property type="entry name" value="ATP phosphoribosyltransferase"/>
    <property type="match status" value="1"/>
</dbReference>
<dbReference type="Gene3D" id="3.30.70.120">
    <property type="match status" value="1"/>
</dbReference>
<dbReference type="Gene3D" id="3.40.190.10">
    <property type="entry name" value="Periplasmic binding protein-like II"/>
    <property type="match status" value="2"/>
</dbReference>
<dbReference type="HAMAP" id="MF_00079">
    <property type="entry name" value="HisG_Long"/>
    <property type="match status" value="1"/>
</dbReference>
<dbReference type="InterPro" id="IPR020621">
    <property type="entry name" value="ATP-PRT_HisG_long"/>
</dbReference>
<dbReference type="InterPro" id="IPR013820">
    <property type="entry name" value="ATP_PRibTrfase_cat"/>
</dbReference>
<dbReference type="InterPro" id="IPR018198">
    <property type="entry name" value="ATP_PRibTrfase_CS"/>
</dbReference>
<dbReference type="InterPro" id="IPR001348">
    <property type="entry name" value="ATP_PRibTrfase_HisG"/>
</dbReference>
<dbReference type="InterPro" id="IPR013115">
    <property type="entry name" value="HisG_C"/>
</dbReference>
<dbReference type="InterPro" id="IPR011322">
    <property type="entry name" value="N-reg_PII-like_a/b"/>
</dbReference>
<dbReference type="InterPro" id="IPR015867">
    <property type="entry name" value="N-reg_PII/ATP_PRibTrfase_C"/>
</dbReference>
<dbReference type="NCBIfam" id="TIGR00070">
    <property type="entry name" value="hisG"/>
    <property type="match status" value="1"/>
</dbReference>
<dbReference type="NCBIfam" id="TIGR03455">
    <property type="entry name" value="HisG_C-term"/>
    <property type="match status" value="1"/>
</dbReference>
<dbReference type="PANTHER" id="PTHR21403:SF8">
    <property type="entry name" value="ATP PHOSPHORIBOSYLTRANSFERASE"/>
    <property type="match status" value="1"/>
</dbReference>
<dbReference type="PANTHER" id="PTHR21403">
    <property type="entry name" value="ATP PHOSPHORIBOSYLTRANSFERASE ATP-PRTASE"/>
    <property type="match status" value="1"/>
</dbReference>
<dbReference type="Pfam" id="PF01634">
    <property type="entry name" value="HisG"/>
    <property type="match status" value="1"/>
</dbReference>
<dbReference type="Pfam" id="PF08029">
    <property type="entry name" value="HisG_C"/>
    <property type="match status" value="1"/>
</dbReference>
<dbReference type="SUPFAM" id="SSF54913">
    <property type="entry name" value="GlnB-like"/>
    <property type="match status" value="1"/>
</dbReference>
<dbReference type="SUPFAM" id="SSF53850">
    <property type="entry name" value="Periplasmic binding protein-like II"/>
    <property type="match status" value="1"/>
</dbReference>
<dbReference type="PROSITE" id="PS01316">
    <property type="entry name" value="ATP_P_PHORIBOSYLTR"/>
    <property type="match status" value="1"/>
</dbReference>
<evidence type="ECO:0000255" key="1">
    <source>
        <dbReference type="HAMAP-Rule" id="MF_00079"/>
    </source>
</evidence>
<sequence length="298" mass="32768">MSSQRLRIAIQKKGRLSKECQELFKRCGMKFNISGERLVVHSENMPIDLLLVRDDDIPSLIMDGVVDLGVIGENELEEVRLERKALGEPSAFTTLRRLDFGGCRLSIAIDKDEVYNGPQDLAGKRIATTYPQLLKSFMDEQGIPFSTCILNGSVEVAPRAGLADAIADLVSTGATLEANGLKEAEVIFRSKATLIQREGEFDADKAALINKLLTRMQGCIQAKESKYIMLHAPTDKLDAIKDLLPGAEDPTVLPLSRDGAKVAVHLVSTENLFWETMEQLKALGASSILVLPIEKMME</sequence>
<organism>
    <name type="scientific">Aliivibrio fischeri (strain ATCC 700601 / ES114)</name>
    <name type="common">Vibrio fischeri</name>
    <dbReference type="NCBI Taxonomy" id="312309"/>
    <lineage>
        <taxon>Bacteria</taxon>
        <taxon>Pseudomonadati</taxon>
        <taxon>Pseudomonadota</taxon>
        <taxon>Gammaproteobacteria</taxon>
        <taxon>Vibrionales</taxon>
        <taxon>Vibrionaceae</taxon>
        <taxon>Aliivibrio</taxon>
    </lineage>
</organism>
<reference key="1">
    <citation type="journal article" date="2005" name="Proc. Natl. Acad. Sci. U.S.A.">
        <title>Complete genome sequence of Vibrio fischeri: a symbiotic bacterium with pathogenic congeners.</title>
        <authorList>
            <person name="Ruby E.G."/>
            <person name="Urbanowski M."/>
            <person name="Campbell J."/>
            <person name="Dunn A."/>
            <person name="Faini M."/>
            <person name="Gunsalus R."/>
            <person name="Lostroh P."/>
            <person name="Lupp C."/>
            <person name="McCann J."/>
            <person name="Millikan D."/>
            <person name="Schaefer A."/>
            <person name="Stabb E."/>
            <person name="Stevens A."/>
            <person name="Visick K."/>
            <person name="Whistler C."/>
            <person name="Greenberg E.P."/>
        </authorList>
    </citation>
    <scope>NUCLEOTIDE SEQUENCE [LARGE SCALE GENOMIC DNA]</scope>
    <source>
        <strain>ATCC 700601 / ES114</strain>
    </source>
</reference>
<keyword id="KW-0028">Amino-acid biosynthesis</keyword>
<keyword id="KW-0067">ATP-binding</keyword>
<keyword id="KW-0963">Cytoplasm</keyword>
<keyword id="KW-0328">Glycosyltransferase</keyword>
<keyword id="KW-0368">Histidine biosynthesis</keyword>
<keyword id="KW-0460">Magnesium</keyword>
<keyword id="KW-0479">Metal-binding</keyword>
<keyword id="KW-0547">Nucleotide-binding</keyword>
<keyword id="KW-1185">Reference proteome</keyword>
<keyword id="KW-0808">Transferase</keyword>
<accession>Q5E639</accession>
<gene>
    <name evidence="1" type="primary">hisG</name>
    <name type="ordered locus">VF_1012</name>
</gene>
<protein>
    <recommendedName>
        <fullName evidence="1">ATP phosphoribosyltransferase</fullName>
        <shortName evidence="1">ATP-PRT</shortName>
        <shortName evidence="1">ATP-PRTase</shortName>
        <ecNumber evidence="1">2.4.2.17</ecNumber>
    </recommendedName>
</protein>
<feature type="chain" id="PRO_1000004512" description="ATP phosphoribosyltransferase">
    <location>
        <begin position="1"/>
        <end position="298"/>
    </location>
</feature>